<comment type="function">
    <text evidence="1">Accelerates the degradation of transcripts by removing pyrophosphate from the 5'-end of triphosphorylated RNA, leading to a more labile monophosphorylated state that can stimulate subsequent ribonuclease cleavage.</text>
</comment>
<comment type="cofactor">
    <cofactor evidence="1">
        <name>a divalent metal cation</name>
        <dbReference type="ChEBI" id="CHEBI:60240"/>
    </cofactor>
</comment>
<comment type="similarity">
    <text evidence="1">Belongs to the Nudix hydrolase family. RppH subfamily.</text>
</comment>
<keyword id="KW-0378">Hydrolase</keyword>
<keyword id="KW-1185">Reference proteome</keyword>
<accession>A3D1T9</accession>
<organism>
    <name type="scientific">Shewanella baltica (strain OS155 / ATCC BAA-1091)</name>
    <dbReference type="NCBI Taxonomy" id="325240"/>
    <lineage>
        <taxon>Bacteria</taxon>
        <taxon>Pseudomonadati</taxon>
        <taxon>Pseudomonadota</taxon>
        <taxon>Gammaproteobacteria</taxon>
        <taxon>Alteromonadales</taxon>
        <taxon>Shewanellaceae</taxon>
        <taxon>Shewanella</taxon>
    </lineage>
</organism>
<proteinExistence type="inferred from homology"/>
<sequence length="174" mass="20574">MIDSDGFRANVGIIICNRYGQVMWARRFGQHSWQFPQGGVDDGETAEEAMYRELYEEVGLRPEHVHILTSTRSWLRYRLPKRLVRQDSKPVCIGQKQKWFLLQLKSQDSAINLSSSGHPEFDDWRWVSYWYPVRQVVSFKRDVYRKVMKEFAVTALSFQTLEIPRKRGRQKTTG</sequence>
<name>RPPH_SHEB5</name>
<gene>
    <name evidence="1" type="primary">rppH</name>
    <name evidence="1" type="synonym">nudH</name>
    <name type="ordered locus">Sbal_1184</name>
</gene>
<reference key="1">
    <citation type="submission" date="2007-02" db="EMBL/GenBank/DDBJ databases">
        <title>Complete sequence of chromosome of Shewanella baltica OS155.</title>
        <authorList>
            <consortium name="US DOE Joint Genome Institute"/>
            <person name="Copeland A."/>
            <person name="Lucas S."/>
            <person name="Lapidus A."/>
            <person name="Barry K."/>
            <person name="Detter J.C."/>
            <person name="Glavina del Rio T."/>
            <person name="Hammon N."/>
            <person name="Israni S."/>
            <person name="Dalin E."/>
            <person name="Tice H."/>
            <person name="Pitluck S."/>
            <person name="Sims D.R."/>
            <person name="Brettin T."/>
            <person name="Bruce D."/>
            <person name="Han C."/>
            <person name="Tapia R."/>
            <person name="Brainard J."/>
            <person name="Schmutz J."/>
            <person name="Larimer F."/>
            <person name="Land M."/>
            <person name="Hauser L."/>
            <person name="Kyrpides N."/>
            <person name="Mikhailova N."/>
            <person name="Brettar I."/>
            <person name="Klappenbach J."/>
            <person name="Konstantinidis K."/>
            <person name="Rodrigues J."/>
            <person name="Tiedje J."/>
            <person name="Richardson P."/>
        </authorList>
    </citation>
    <scope>NUCLEOTIDE SEQUENCE [LARGE SCALE GENOMIC DNA]</scope>
    <source>
        <strain>OS155 / ATCC BAA-1091</strain>
    </source>
</reference>
<protein>
    <recommendedName>
        <fullName evidence="1">RNA pyrophosphohydrolase</fullName>
        <ecNumber evidence="1">3.6.1.-</ecNumber>
    </recommendedName>
    <alternativeName>
        <fullName evidence="1">(Di)nucleoside polyphosphate hydrolase</fullName>
    </alternativeName>
</protein>
<feature type="chain" id="PRO_1000021993" description="RNA pyrophosphohydrolase">
    <location>
        <begin position="1"/>
        <end position="174"/>
    </location>
</feature>
<feature type="domain" description="Nudix hydrolase" evidence="1">
    <location>
        <begin position="6"/>
        <end position="149"/>
    </location>
</feature>
<feature type="short sequence motif" description="Nudix box">
    <location>
        <begin position="38"/>
        <end position="59"/>
    </location>
</feature>
<dbReference type="EC" id="3.6.1.-" evidence="1"/>
<dbReference type="EMBL" id="CP000563">
    <property type="protein sequence ID" value="ABN60702.1"/>
    <property type="molecule type" value="Genomic_DNA"/>
</dbReference>
<dbReference type="RefSeq" id="WP_006080762.1">
    <property type="nucleotide sequence ID" value="NC_009052.1"/>
</dbReference>
<dbReference type="SMR" id="A3D1T9"/>
<dbReference type="STRING" id="325240.Sbal_1184"/>
<dbReference type="GeneID" id="11771531"/>
<dbReference type="KEGG" id="sbl:Sbal_1184"/>
<dbReference type="HOGENOM" id="CLU_087195_3_1_6"/>
<dbReference type="OrthoDB" id="9816040at2"/>
<dbReference type="Proteomes" id="UP000001557">
    <property type="component" value="Chromosome"/>
</dbReference>
<dbReference type="GO" id="GO:0005737">
    <property type="term" value="C:cytoplasm"/>
    <property type="evidence" value="ECO:0007669"/>
    <property type="project" value="TreeGrafter"/>
</dbReference>
<dbReference type="GO" id="GO:0034353">
    <property type="term" value="F:mRNA 5'-diphosphatase activity"/>
    <property type="evidence" value="ECO:0007669"/>
    <property type="project" value="TreeGrafter"/>
</dbReference>
<dbReference type="GO" id="GO:0006402">
    <property type="term" value="P:mRNA catabolic process"/>
    <property type="evidence" value="ECO:0007669"/>
    <property type="project" value="TreeGrafter"/>
</dbReference>
<dbReference type="CDD" id="cd03671">
    <property type="entry name" value="NUDIX_Ap4A_hydrolase_plant_like"/>
    <property type="match status" value="1"/>
</dbReference>
<dbReference type="FunFam" id="3.90.79.10:FF:000001">
    <property type="entry name" value="RNA pyrophosphohydrolase"/>
    <property type="match status" value="1"/>
</dbReference>
<dbReference type="Gene3D" id="3.90.79.10">
    <property type="entry name" value="Nucleoside Triphosphate Pyrophosphohydrolase"/>
    <property type="match status" value="1"/>
</dbReference>
<dbReference type="HAMAP" id="MF_00298">
    <property type="entry name" value="Nudix_RppH"/>
    <property type="match status" value="1"/>
</dbReference>
<dbReference type="InterPro" id="IPR020476">
    <property type="entry name" value="Nudix_hydrolase"/>
</dbReference>
<dbReference type="InterPro" id="IPR015797">
    <property type="entry name" value="NUDIX_hydrolase-like_dom_sf"/>
</dbReference>
<dbReference type="InterPro" id="IPR020084">
    <property type="entry name" value="NUDIX_hydrolase_CS"/>
</dbReference>
<dbReference type="InterPro" id="IPR000086">
    <property type="entry name" value="NUDIX_hydrolase_dom"/>
</dbReference>
<dbReference type="InterPro" id="IPR022927">
    <property type="entry name" value="RppH"/>
</dbReference>
<dbReference type="NCBIfam" id="NF001934">
    <property type="entry name" value="PRK00714.1-1"/>
    <property type="match status" value="1"/>
</dbReference>
<dbReference type="NCBIfam" id="NF001937">
    <property type="entry name" value="PRK00714.1-4"/>
    <property type="match status" value="1"/>
</dbReference>
<dbReference type="NCBIfam" id="NF001938">
    <property type="entry name" value="PRK00714.1-5"/>
    <property type="match status" value="1"/>
</dbReference>
<dbReference type="PANTHER" id="PTHR23114">
    <property type="entry name" value="M7GPPPN-MRNA HYDROLASE"/>
    <property type="match status" value="1"/>
</dbReference>
<dbReference type="PANTHER" id="PTHR23114:SF17">
    <property type="entry name" value="M7GPPPN-MRNA HYDROLASE"/>
    <property type="match status" value="1"/>
</dbReference>
<dbReference type="Pfam" id="PF00293">
    <property type="entry name" value="NUDIX"/>
    <property type="match status" value="1"/>
</dbReference>
<dbReference type="PRINTS" id="PR00502">
    <property type="entry name" value="NUDIXFAMILY"/>
</dbReference>
<dbReference type="SUPFAM" id="SSF55811">
    <property type="entry name" value="Nudix"/>
    <property type="match status" value="1"/>
</dbReference>
<dbReference type="PROSITE" id="PS51462">
    <property type="entry name" value="NUDIX"/>
    <property type="match status" value="1"/>
</dbReference>
<dbReference type="PROSITE" id="PS00893">
    <property type="entry name" value="NUDIX_BOX"/>
    <property type="match status" value="1"/>
</dbReference>
<evidence type="ECO:0000255" key="1">
    <source>
        <dbReference type="HAMAP-Rule" id="MF_00298"/>
    </source>
</evidence>